<reference key="1">
    <citation type="journal article" date="1988" name="Biochem. Biophys. Res. Commun.">
        <title>The nucleolar protein, B-36, contains a glycine and dimethylarginine-rich sequence conserved in several other nuclear RNA-binding proteins.</title>
        <authorList>
            <person name="Christensen M.E."/>
            <person name="Fuxa K.P."/>
        </authorList>
    </citation>
    <scope>PROTEIN SEQUENCE</scope>
    <scope>METHYLATION AT ARG-5; ARG-11; ARG-16 AND ARG-19</scope>
</reference>
<evidence type="ECO:0000250" key="1"/>
<evidence type="ECO:0000256" key="2">
    <source>
        <dbReference type="SAM" id="MobiDB-lite"/>
    </source>
</evidence>
<evidence type="ECO:0000269" key="3">
    <source>
    </source>
</evidence>
<evidence type="ECO:0000305" key="4"/>
<sequence length="27" mass="2464">XFEGRGGFGGRGGGDRGGRGXGGFGGG</sequence>
<proteinExistence type="evidence at protein level"/>
<dbReference type="EC" id="2.1.1.-"/>
<dbReference type="PIR" id="A31508">
    <property type="entry name" value="A31508"/>
</dbReference>
<dbReference type="iPTMnet" id="P22508"/>
<dbReference type="GO" id="GO:0005730">
    <property type="term" value="C:nucleolus"/>
    <property type="evidence" value="ECO:0007669"/>
    <property type="project" value="UniProtKB-SubCell"/>
</dbReference>
<dbReference type="GO" id="GO:1990904">
    <property type="term" value="C:ribonucleoprotein complex"/>
    <property type="evidence" value="ECO:0007669"/>
    <property type="project" value="UniProtKB-KW"/>
</dbReference>
<dbReference type="GO" id="GO:0008168">
    <property type="term" value="F:methyltransferase activity"/>
    <property type="evidence" value="ECO:0007669"/>
    <property type="project" value="UniProtKB-KW"/>
</dbReference>
<dbReference type="GO" id="GO:0003723">
    <property type="term" value="F:RNA binding"/>
    <property type="evidence" value="ECO:0007669"/>
    <property type="project" value="UniProtKB-KW"/>
</dbReference>
<dbReference type="GO" id="GO:0032259">
    <property type="term" value="P:methylation"/>
    <property type="evidence" value="ECO:0007669"/>
    <property type="project" value="UniProtKB-KW"/>
</dbReference>
<dbReference type="GO" id="GO:0006364">
    <property type="term" value="P:rRNA processing"/>
    <property type="evidence" value="ECO:0007669"/>
    <property type="project" value="UniProtKB-KW"/>
</dbReference>
<accession>P22508</accession>
<comment type="function">
    <text evidence="1">S-adenosyl-L-methionine-dependent methyltransferase that has the ability to methylate both RNAs and proteins. Involved in pre-rRNA processing. Utilizes the methyl donor S-adenosyl-L-methionine to catalyze the site-specific 2'-hydroxyl methylation of ribose moieties in pre-ribosomal RNA. Site specificity is provided by a guide RNA that base pairs with the substrate. Methylation occurs at a characteristic distance from the sequence involved in base pairing with the guide RNA. Also acts as a protein methyltransferase by mediating methylation of 'Gln-105' of histone H2A (H2AQ105me), a modification that impairs binding of the FACT complex and is specifically present at 35S ribosomal DNA locus (By similarity).</text>
</comment>
<comment type="catalytic activity">
    <reaction>
        <text>L-glutaminyl-[histone H2A] + S-adenosyl-L-methionine = N(5)-methyl-L-glutaminyl-[histone H2A] + S-adenosyl-L-homocysteine + H(+)</text>
        <dbReference type="Rhea" id="RHEA:50904"/>
        <dbReference type="Rhea" id="RHEA-COMP:12837"/>
        <dbReference type="Rhea" id="RHEA-COMP:12839"/>
        <dbReference type="ChEBI" id="CHEBI:15378"/>
        <dbReference type="ChEBI" id="CHEBI:30011"/>
        <dbReference type="ChEBI" id="CHEBI:57856"/>
        <dbReference type="ChEBI" id="CHEBI:59789"/>
        <dbReference type="ChEBI" id="CHEBI:61891"/>
    </reaction>
</comment>
<comment type="subunit">
    <text evidence="1">Component of box C/D small nucleolar ribonucleoprotein (snoRNP) particles. It is associated with the U3, U8 and U13 small nuclear RNAs (By similarity).</text>
</comment>
<comment type="subcellular location">
    <subcellularLocation>
        <location>Nucleus</location>
        <location>Nucleolus</location>
    </subcellularLocation>
    <text>Fibrillar region of the nucleolus.</text>
</comment>
<comment type="similarity">
    <text evidence="4">Belongs to the methyltransferase superfamily. Fibrillarin family.</text>
</comment>
<name>FBRL_PHYPO</name>
<organism>
    <name type="scientific">Physarum polycephalum</name>
    <name type="common">Slime mold</name>
    <dbReference type="NCBI Taxonomy" id="5791"/>
    <lineage>
        <taxon>Eukaryota</taxon>
        <taxon>Amoebozoa</taxon>
        <taxon>Evosea</taxon>
        <taxon>Eumycetozoa</taxon>
        <taxon>Myxogastria</taxon>
        <taxon>Myxogastromycetidae</taxon>
        <taxon>Physariida</taxon>
        <taxon>Physaraceae</taxon>
        <taxon>Physarum</taxon>
    </lineage>
</organism>
<keyword id="KW-0903">Direct protein sequencing</keyword>
<keyword id="KW-0488">Methylation</keyword>
<keyword id="KW-0489">Methyltransferase</keyword>
<keyword id="KW-0539">Nucleus</keyword>
<keyword id="KW-0687">Ribonucleoprotein</keyword>
<keyword id="KW-0694">RNA-binding</keyword>
<keyword id="KW-0698">rRNA processing</keyword>
<keyword id="KW-0949">S-adenosyl-L-methionine</keyword>
<keyword id="KW-0808">Transferase</keyword>
<feature type="chain" id="PRO_0000148516" description="rRNA/tRNA 2'-O-methyltransferase fibrillarin">
    <location>
        <begin position="1"/>
        <end position="27" status="greater than"/>
    </location>
</feature>
<feature type="region of interest" description="Disordered" evidence="2">
    <location>
        <begin position="1"/>
        <end position="27"/>
    </location>
</feature>
<feature type="compositionally biased region" description="Gly residues" evidence="2">
    <location>
        <begin position="1"/>
        <end position="12"/>
    </location>
</feature>
<feature type="modified residue" description="Asymmetric dimethylarginine" evidence="3">
    <location>
        <position position="5"/>
    </location>
</feature>
<feature type="modified residue" description="Asymmetric dimethylarginine" evidence="3">
    <location>
        <position position="11"/>
    </location>
</feature>
<feature type="modified residue" description="Asymmetric dimethylarginine" evidence="3">
    <location>
        <position position="16"/>
    </location>
</feature>
<feature type="modified residue" description="Asymmetric dimethylarginine" evidence="3">
    <location>
        <position position="19"/>
    </location>
</feature>
<feature type="non-terminal residue">
    <location>
        <position position="27"/>
    </location>
</feature>
<protein>
    <recommendedName>
        <fullName>rRNA/tRNA 2'-O-methyltransferase fibrillarin</fullName>
        <ecNumber>2.1.1.-</ecNumber>
    </recommendedName>
    <alternativeName>
        <fullName>34 kDa nucleolar protein B-36</fullName>
    </alternativeName>
    <alternativeName>
        <fullName>Histone-glutamine methyltransferase</fullName>
    </alternativeName>
</protein>